<protein>
    <recommendedName>
        <fullName evidence="1">Glycine--tRNA ligase alpha subunit</fullName>
        <ecNumber evidence="1">6.1.1.14</ecNumber>
    </recommendedName>
    <alternativeName>
        <fullName evidence="1">Glycyl-tRNA synthetase alpha subunit</fullName>
        <shortName evidence="1">GlyRS</shortName>
    </alternativeName>
</protein>
<proteinExistence type="inferred from homology"/>
<sequence>MLTFQEIILKLQTYWGQQGCAILQPFDMEVGAGTSHPATCLRAIGPEPWNAAYVQPSRRPKDGRYGENPNRLQHYYQFQVALKPNPDNIQELYLGSLRELGIDPTVHDIRFVEDDWENPTLGAWGLGWEVWLNGMEVTQFTYFQQVGGIDCKPVLGEITYGIERLAMYLQGVENVYDLVWTVYPSGQVVTYGDVYHQNEVEQSTYNFEYANVPKLFELFSYYESEARRLLDVPLALPAYEMVLKAGHTFNLLDARGAISVTERAAYIGRVRTLSRGVAQAYYNAREALGFPMLKQDSAE</sequence>
<keyword id="KW-0030">Aminoacyl-tRNA synthetase</keyword>
<keyword id="KW-0067">ATP-binding</keyword>
<keyword id="KW-0963">Cytoplasm</keyword>
<keyword id="KW-0436">Ligase</keyword>
<keyword id="KW-0547">Nucleotide-binding</keyword>
<keyword id="KW-0648">Protein biosynthesis</keyword>
<keyword id="KW-1185">Reference proteome</keyword>
<gene>
    <name evidence="1" type="primary">glyQ</name>
    <name type="ordered locus">LHK_00746</name>
</gene>
<reference key="1">
    <citation type="journal article" date="2009" name="PLoS Genet.">
        <title>The complete genome and proteome of Laribacter hongkongensis reveal potential mechanisms for adaptations to different temperatures and habitats.</title>
        <authorList>
            <person name="Woo P.C.Y."/>
            <person name="Lau S.K.P."/>
            <person name="Tse H."/>
            <person name="Teng J.L.L."/>
            <person name="Curreem S.O."/>
            <person name="Tsang A.K.L."/>
            <person name="Fan R.Y.Y."/>
            <person name="Wong G.K.M."/>
            <person name="Huang Y."/>
            <person name="Loman N.J."/>
            <person name="Snyder L.A.S."/>
            <person name="Cai J.J."/>
            <person name="Huang J.-D."/>
            <person name="Mak W."/>
            <person name="Pallen M.J."/>
            <person name="Lok S."/>
            <person name="Yuen K.-Y."/>
        </authorList>
    </citation>
    <scope>NUCLEOTIDE SEQUENCE [LARGE SCALE GENOMIC DNA]</scope>
    <source>
        <strain>HLHK9</strain>
    </source>
</reference>
<evidence type="ECO:0000255" key="1">
    <source>
        <dbReference type="HAMAP-Rule" id="MF_00254"/>
    </source>
</evidence>
<organism>
    <name type="scientific">Laribacter hongkongensis (strain HLHK9)</name>
    <dbReference type="NCBI Taxonomy" id="557598"/>
    <lineage>
        <taxon>Bacteria</taxon>
        <taxon>Pseudomonadati</taxon>
        <taxon>Pseudomonadota</taxon>
        <taxon>Betaproteobacteria</taxon>
        <taxon>Neisseriales</taxon>
        <taxon>Aquaspirillaceae</taxon>
        <taxon>Laribacter</taxon>
    </lineage>
</organism>
<comment type="catalytic activity">
    <reaction evidence="1">
        <text>tRNA(Gly) + glycine + ATP = glycyl-tRNA(Gly) + AMP + diphosphate</text>
        <dbReference type="Rhea" id="RHEA:16013"/>
        <dbReference type="Rhea" id="RHEA-COMP:9664"/>
        <dbReference type="Rhea" id="RHEA-COMP:9683"/>
        <dbReference type="ChEBI" id="CHEBI:30616"/>
        <dbReference type="ChEBI" id="CHEBI:33019"/>
        <dbReference type="ChEBI" id="CHEBI:57305"/>
        <dbReference type="ChEBI" id="CHEBI:78442"/>
        <dbReference type="ChEBI" id="CHEBI:78522"/>
        <dbReference type="ChEBI" id="CHEBI:456215"/>
        <dbReference type="EC" id="6.1.1.14"/>
    </reaction>
</comment>
<comment type="subunit">
    <text evidence="1">Tetramer of two alpha and two beta subunits.</text>
</comment>
<comment type="subcellular location">
    <subcellularLocation>
        <location evidence="1">Cytoplasm</location>
    </subcellularLocation>
</comment>
<comment type="similarity">
    <text evidence="1">Belongs to the class-II aminoacyl-tRNA synthetase family.</text>
</comment>
<name>SYGA_LARHH</name>
<accession>C1D4E5</accession>
<dbReference type="EC" id="6.1.1.14" evidence="1"/>
<dbReference type="EMBL" id="CP001154">
    <property type="protein sequence ID" value="ACO73739.1"/>
    <property type="molecule type" value="Genomic_DNA"/>
</dbReference>
<dbReference type="RefSeq" id="WP_012696231.1">
    <property type="nucleotide sequence ID" value="NC_012559.1"/>
</dbReference>
<dbReference type="SMR" id="C1D4E5"/>
<dbReference type="STRING" id="557598.LHK_00746"/>
<dbReference type="GeneID" id="75109065"/>
<dbReference type="KEGG" id="lhk:LHK_00746"/>
<dbReference type="eggNOG" id="COG0752">
    <property type="taxonomic scope" value="Bacteria"/>
</dbReference>
<dbReference type="HOGENOM" id="CLU_057066_1_0_4"/>
<dbReference type="Proteomes" id="UP000002010">
    <property type="component" value="Chromosome"/>
</dbReference>
<dbReference type="GO" id="GO:0005829">
    <property type="term" value="C:cytosol"/>
    <property type="evidence" value="ECO:0007669"/>
    <property type="project" value="TreeGrafter"/>
</dbReference>
<dbReference type="GO" id="GO:0005524">
    <property type="term" value="F:ATP binding"/>
    <property type="evidence" value="ECO:0007669"/>
    <property type="project" value="UniProtKB-UniRule"/>
</dbReference>
<dbReference type="GO" id="GO:0004820">
    <property type="term" value="F:glycine-tRNA ligase activity"/>
    <property type="evidence" value="ECO:0007669"/>
    <property type="project" value="UniProtKB-UniRule"/>
</dbReference>
<dbReference type="GO" id="GO:0006426">
    <property type="term" value="P:glycyl-tRNA aminoacylation"/>
    <property type="evidence" value="ECO:0007669"/>
    <property type="project" value="UniProtKB-UniRule"/>
</dbReference>
<dbReference type="CDD" id="cd00733">
    <property type="entry name" value="GlyRS_alpha_core"/>
    <property type="match status" value="1"/>
</dbReference>
<dbReference type="FunFam" id="3.30.930.10:FF:000006">
    <property type="entry name" value="Glycine--tRNA ligase alpha subunit"/>
    <property type="match status" value="1"/>
</dbReference>
<dbReference type="Gene3D" id="3.30.930.10">
    <property type="entry name" value="Bira Bifunctional Protein, Domain 2"/>
    <property type="match status" value="1"/>
</dbReference>
<dbReference type="Gene3D" id="1.20.58.180">
    <property type="entry name" value="Class II aaRS and biotin synthetases, domain 2"/>
    <property type="match status" value="1"/>
</dbReference>
<dbReference type="HAMAP" id="MF_00254">
    <property type="entry name" value="Gly_tRNA_synth_alpha"/>
    <property type="match status" value="1"/>
</dbReference>
<dbReference type="InterPro" id="IPR045864">
    <property type="entry name" value="aa-tRNA-synth_II/BPL/LPL"/>
</dbReference>
<dbReference type="InterPro" id="IPR006194">
    <property type="entry name" value="Gly-tRNA-synth_heterodimer"/>
</dbReference>
<dbReference type="InterPro" id="IPR002310">
    <property type="entry name" value="Gly-tRNA_ligase_asu"/>
</dbReference>
<dbReference type="NCBIfam" id="TIGR00388">
    <property type="entry name" value="glyQ"/>
    <property type="match status" value="1"/>
</dbReference>
<dbReference type="NCBIfam" id="NF006827">
    <property type="entry name" value="PRK09348.1"/>
    <property type="match status" value="1"/>
</dbReference>
<dbReference type="PANTHER" id="PTHR30075:SF2">
    <property type="entry name" value="GLYCINE--TRNA LIGASE, CHLOROPLASTIC_MITOCHONDRIAL 2"/>
    <property type="match status" value="1"/>
</dbReference>
<dbReference type="PANTHER" id="PTHR30075">
    <property type="entry name" value="GLYCYL-TRNA SYNTHETASE"/>
    <property type="match status" value="1"/>
</dbReference>
<dbReference type="Pfam" id="PF02091">
    <property type="entry name" value="tRNA-synt_2e"/>
    <property type="match status" value="1"/>
</dbReference>
<dbReference type="PRINTS" id="PR01044">
    <property type="entry name" value="TRNASYNTHGA"/>
</dbReference>
<dbReference type="SUPFAM" id="SSF55681">
    <property type="entry name" value="Class II aaRS and biotin synthetases"/>
    <property type="match status" value="1"/>
</dbReference>
<dbReference type="PROSITE" id="PS50861">
    <property type="entry name" value="AA_TRNA_LIGASE_II_GLYAB"/>
    <property type="match status" value="1"/>
</dbReference>
<feature type="chain" id="PRO_1000125551" description="Glycine--tRNA ligase alpha subunit">
    <location>
        <begin position="1"/>
        <end position="299"/>
    </location>
</feature>